<reference key="1">
    <citation type="journal article" date="1999" name="DNA Res.">
        <title>Complete genome sequence of an aerobic hyper-thermophilic crenarchaeon, Aeropyrum pernix K1.</title>
        <authorList>
            <person name="Kawarabayasi Y."/>
            <person name="Hino Y."/>
            <person name="Horikawa H."/>
            <person name="Yamazaki S."/>
            <person name="Haikawa Y."/>
            <person name="Jin-no K."/>
            <person name="Takahashi M."/>
            <person name="Sekine M."/>
            <person name="Baba S."/>
            <person name="Ankai A."/>
            <person name="Kosugi H."/>
            <person name="Hosoyama A."/>
            <person name="Fukui S."/>
            <person name="Nagai Y."/>
            <person name="Nishijima K."/>
            <person name="Nakazawa H."/>
            <person name="Takamiya M."/>
            <person name="Masuda S."/>
            <person name="Funahashi T."/>
            <person name="Tanaka T."/>
            <person name="Kudoh Y."/>
            <person name="Yamazaki J."/>
            <person name="Kushida N."/>
            <person name="Oguchi A."/>
            <person name="Aoki K."/>
            <person name="Kubota K."/>
            <person name="Nakamura Y."/>
            <person name="Nomura N."/>
            <person name="Sako Y."/>
            <person name="Kikuchi H."/>
        </authorList>
    </citation>
    <scope>NUCLEOTIDE SEQUENCE [LARGE SCALE GENOMIC DNA]</scope>
    <source>
        <strain>ATCC 700893 / DSM 11879 / JCM 9820 / NBRC 100138 / K1</strain>
    </source>
</reference>
<keyword id="KW-1185">Reference proteome</keyword>
<feature type="chain" id="PRO_0000136569" description="Uncharacterized protein APE_1940.1">
    <location>
        <begin position="1"/>
        <end position="212"/>
    </location>
</feature>
<feature type="domain" description="SIS" evidence="1">
    <location>
        <begin position="46"/>
        <end position="198"/>
    </location>
</feature>
<evidence type="ECO:0000255" key="1">
    <source>
        <dbReference type="PROSITE-ProRule" id="PRU00797"/>
    </source>
</evidence>
<evidence type="ECO:0000305" key="2"/>
<dbReference type="EMBL" id="BA000002">
    <property type="protein sequence ID" value="BAA80949.2"/>
    <property type="molecule type" value="Genomic_DNA"/>
</dbReference>
<dbReference type="PIR" id="H72582">
    <property type="entry name" value="H72582"/>
</dbReference>
<dbReference type="RefSeq" id="WP_010866689.1">
    <property type="nucleotide sequence ID" value="NC_000854.2"/>
</dbReference>
<dbReference type="SMR" id="Q9YAK0"/>
<dbReference type="STRING" id="272557.APE_1940.1"/>
<dbReference type="EnsemblBacteria" id="BAA80949">
    <property type="protein sequence ID" value="BAA80949"/>
    <property type="gene ID" value="APE_1940.1"/>
</dbReference>
<dbReference type="GeneID" id="1446352"/>
<dbReference type="KEGG" id="ape:APE_1940.1"/>
<dbReference type="PATRIC" id="fig|272557.25.peg.1292"/>
<dbReference type="eggNOG" id="arCOG00068">
    <property type="taxonomic scope" value="Archaea"/>
</dbReference>
<dbReference type="Proteomes" id="UP000002518">
    <property type="component" value="Chromosome"/>
</dbReference>
<dbReference type="GO" id="GO:0097367">
    <property type="term" value="F:carbohydrate derivative binding"/>
    <property type="evidence" value="ECO:0007669"/>
    <property type="project" value="InterPro"/>
</dbReference>
<dbReference type="GO" id="GO:0016853">
    <property type="term" value="F:isomerase activity"/>
    <property type="evidence" value="ECO:0007669"/>
    <property type="project" value="InterPro"/>
</dbReference>
<dbReference type="GO" id="GO:1901135">
    <property type="term" value="P:carbohydrate derivative metabolic process"/>
    <property type="evidence" value="ECO:0007669"/>
    <property type="project" value="InterPro"/>
</dbReference>
<dbReference type="CDD" id="cd05005">
    <property type="entry name" value="SIS_PHI"/>
    <property type="match status" value="1"/>
</dbReference>
<dbReference type="Gene3D" id="3.40.50.10490">
    <property type="entry name" value="Glucose-6-phosphate isomerase like protein, domain 1"/>
    <property type="match status" value="1"/>
</dbReference>
<dbReference type="InterPro" id="IPR017552">
    <property type="entry name" value="PHI/rmpB"/>
</dbReference>
<dbReference type="InterPro" id="IPR001347">
    <property type="entry name" value="SIS_dom"/>
</dbReference>
<dbReference type="InterPro" id="IPR046348">
    <property type="entry name" value="SIS_dom_sf"/>
</dbReference>
<dbReference type="NCBIfam" id="TIGR03127">
    <property type="entry name" value="RuMP_HxlB"/>
    <property type="match status" value="1"/>
</dbReference>
<dbReference type="PANTHER" id="PTHR43443">
    <property type="entry name" value="3-HEXULOSE-6-PHOSPHATE ISOMERASE"/>
    <property type="match status" value="1"/>
</dbReference>
<dbReference type="PANTHER" id="PTHR43443:SF1">
    <property type="entry name" value="3-HEXULOSE-6-PHOSPHATE ISOMERASE"/>
    <property type="match status" value="1"/>
</dbReference>
<dbReference type="Pfam" id="PF01380">
    <property type="entry name" value="SIS"/>
    <property type="match status" value="1"/>
</dbReference>
<dbReference type="SUPFAM" id="SSF53697">
    <property type="entry name" value="SIS domain"/>
    <property type="match status" value="1"/>
</dbReference>
<dbReference type="PROSITE" id="PS51464">
    <property type="entry name" value="SIS"/>
    <property type="match status" value="1"/>
</dbReference>
<proteinExistence type="inferred from homology"/>
<accession>Q9YAK0</accession>
<sequence length="212" mass="23407">MQLNIYLRDSKLSHPVFKTMSEIALFIINSINEIDVGQVDRFVGELERVYREKRKVLVMGAGRSGLVGKAFAMRLLHLGFNSYVLGETIVPSVREGDLVVAISGSGRTKVIVTAAETAKQVGATVAAITTYPDSPLGRLSDIVVRVPGRTKSSKMDDYFARQILGIHEPLAPLGTLFEDTTMVFLDGVIYSLMTRLGIDEEYMRNMHANVEL</sequence>
<comment type="similarity">
    <text evidence="2">Belongs to the SIS family. PHI subfamily.</text>
</comment>
<name>Y1940_AERPE</name>
<organism>
    <name type="scientific">Aeropyrum pernix (strain ATCC 700893 / DSM 11879 / JCM 9820 / NBRC 100138 / K1)</name>
    <dbReference type="NCBI Taxonomy" id="272557"/>
    <lineage>
        <taxon>Archaea</taxon>
        <taxon>Thermoproteota</taxon>
        <taxon>Thermoprotei</taxon>
        <taxon>Desulfurococcales</taxon>
        <taxon>Desulfurococcaceae</taxon>
        <taxon>Aeropyrum</taxon>
    </lineage>
</organism>
<protein>
    <recommendedName>
        <fullName>Uncharacterized protein APE_1940.1</fullName>
    </recommendedName>
</protein>
<gene>
    <name type="ordered locus">APE_1940.1</name>
</gene>